<accession>Q8BT88</accession>
<accession>B9EJK2</accession>
<accession>Q9D9P5</accession>
<name>CP090_MOUSE</name>
<proteinExistence type="evidence at transcript level"/>
<dbReference type="EMBL" id="AK006619">
    <property type="protein sequence ID" value="BAB24677.1"/>
    <property type="molecule type" value="mRNA"/>
</dbReference>
<dbReference type="EMBL" id="AK012792">
    <property type="protein sequence ID" value="BAC25379.1"/>
    <property type="status" value="ALT_FRAME"/>
    <property type="molecule type" value="mRNA"/>
</dbReference>
<dbReference type="EMBL" id="BC147295">
    <property type="protein sequence ID" value="AAI47296.1"/>
    <property type="molecule type" value="mRNA"/>
</dbReference>
<dbReference type="CCDS" id="CCDS49746.1">
    <molecule id="Q8BT88-1"/>
</dbReference>
<dbReference type="RefSeq" id="NP_082760.2">
    <molecule id="Q8BT88-1"/>
    <property type="nucleotide sequence ID" value="NM_028484.2"/>
</dbReference>
<dbReference type="FunCoup" id="Q8BT88">
    <property type="interactions" value="1"/>
</dbReference>
<dbReference type="PaxDb" id="10090-ENSMUSP00000111525"/>
<dbReference type="Antibodypedia" id="71412">
    <property type="antibodies" value="10 antibodies from 5 providers"/>
</dbReference>
<dbReference type="Ensembl" id="ENSMUST00000115859.8">
    <molecule id="Q8BT88-1"/>
    <property type="protein sequence ID" value="ENSMUSP00000111525.2"/>
    <property type="gene ID" value="ENSMUSG00000005983.16"/>
</dbReference>
<dbReference type="GeneID" id="73261"/>
<dbReference type="KEGG" id="mmu:73261"/>
<dbReference type="UCSC" id="uc007xyz.1">
    <molecule id="Q8BT88-1"/>
    <property type="organism name" value="mouse"/>
</dbReference>
<dbReference type="AGR" id="MGI:1920511"/>
<dbReference type="MGI" id="MGI:1920511">
    <property type="gene designation" value="1700037C18Rik"/>
</dbReference>
<dbReference type="VEuPathDB" id="HostDB:ENSMUSG00000005983"/>
<dbReference type="eggNOG" id="ENOG502SU94">
    <property type="taxonomic scope" value="Eukaryota"/>
</dbReference>
<dbReference type="GeneTree" id="ENSGT00390000014875"/>
<dbReference type="InParanoid" id="Q8BT88"/>
<dbReference type="OMA" id="MCKRTRP"/>
<dbReference type="OrthoDB" id="37270at9989"/>
<dbReference type="PhylomeDB" id="Q8BT88"/>
<dbReference type="TreeFam" id="TF337958"/>
<dbReference type="BioGRID-ORCS" id="73261">
    <property type="hits" value="4 hits in 76 CRISPR screens"/>
</dbReference>
<dbReference type="PRO" id="PR:Q8BT88"/>
<dbReference type="Proteomes" id="UP000000589">
    <property type="component" value="Chromosome 16"/>
</dbReference>
<dbReference type="RNAct" id="Q8BT88">
    <property type="molecule type" value="protein"/>
</dbReference>
<dbReference type="Bgee" id="ENSMUSG00000005983">
    <property type="expression patterns" value="Expressed in spermatid and 215 other cell types or tissues"/>
</dbReference>
<dbReference type="ExpressionAtlas" id="Q8BT88">
    <property type="expression patterns" value="baseline and differential"/>
</dbReference>
<dbReference type="InterPro" id="IPR027978">
    <property type="entry name" value="DUF4644"/>
</dbReference>
<dbReference type="PANTHER" id="PTHR37334">
    <property type="entry name" value="RGD1561796"/>
    <property type="match status" value="1"/>
</dbReference>
<dbReference type="PANTHER" id="PTHR37334:SF1">
    <property type="entry name" value="RGD1561796"/>
    <property type="match status" value="1"/>
</dbReference>
<dbReference type="Pfam" id="PF15486">
    <property type="entry name" value="DUF4644"/>
    <property type="match status" value="1"/>
</dbReference>
<protein>
    <recommendedName>
        <fullName>Uncharacterized protein C16orf90 homolog</fullName>
    </recommendedName>
</protein>
<evidence type="ECO:0000256" key="1">
    <source>
        <dbReference type="SAM" id="MobiDB-lite"/>
    </source>
</evidence>
<evidence type="ECO:0000303" key="2">
    <source>
    </source>
</evidence>
<evidence type="ECO:0000305" key="3"/>
<sequence>MDAVSWAPGRPSHPDTPPNIYEGGLGAQQQQGPSAQGSKPKNFRLRHLRSLALYLPGHMQPAGQCGSHWLGRLMAGGSLTRPEGSPWPLDLPQGTLGPGNSHCSALLEAHLPRDSLGNTASSSSMDPAKGVPSQSGPPEGLGLRPKRSWRALEETMCPLCKRTRSGALERT</sequence>
<keyword id="KW-0025">Alternative splicing</keyword>
<keyword id="KW-1185">Reference proteome</keyword>
<feature type="chain" id="PRO_0000343582" description="Uncharacterized protein C16orf90 homolog">
    <location>
        <begin position="1"/>
        <end position="171"/>
    </location>
</feature>
<feature type="region of interest" description="Disordered" evidence="1">
    <location>
        <begin position="1"/>
        <end position="41"/>
    </location>
</feature>
<feature type="region of interest" description="Disordered" evidence="1">
    <location>
        <begin position="114"/>
        <end position="147"/>
    </location>
</feature>
<feature type="compositionally biased region" description="Low complexity" evidence="1">
    <location>
        <begin position="27"/>
        <end position="38"/>
    </location>
</feature>
<feature type="compositionally biased region" description="Polar residues" evidence="1">
    <location>
        <begin position="116"/>
        <end position="125"/>
    </location>
</feature>
<feature type="splice variant" id="VSP_034617" description="In isoform 2." evidence="2">
    <original>M</original>
    <variation>MEALVCAFSELRIRE</variation>
    <location>
        <position position="1"/>
    </location>
</feature>
<feature type="splice variant" id="VSP_034618" description="In isoform 2." evidence="2">
    <original>SSSSMDP</original>
    <variation>TIIPTMA</variation>
    <location>
        <begin position="121"/>
        <end position="127"/>
    </location>
</feature>
<feature type="splice variant" id="VSP_034619" description="In isoform 2." evidence="2">
    <location>
        <begin position="128"/>
        <end position="171"/>
    </location>
</feature>
<comment type="alternative products">
    <event type="alternative splicing"/>
    <isoform>
        <id>Q8BT88-1</id>
        <name>1</name>
        <sequence type="displayed"/>
    </isoform>
    <isoform>
        <id>Q8BT88-2</id>
        <name>2</name>
        <sequence type="described" ref="VSP_034617 VSP_034618 VSP_034619"/>
    </isoform>
</comment>
<comment type="sequence caution" evidence="3">
    <conflict type="frameshift">
        <sequence resource="EMBL-CDS" id="BAC25379"/>
    </conflict>
</comment>
<organism>
    <name type="scientific">Mus musculus</name>
    <name type="common">Mouse</name>
    <dbReference type="NCBI Taxonomy" id="10090"/>
    <lineage>
        <taxon>Eukaryota</taxon>
        <taxon>Metazoa</taxon>
        <taxon>Chordata</taxon>
        <taxon>Craniata</taxon>
        <taxon>Vertebrata</taxon>
        <taxon>Euteleostomi</taxon>
        <taxon>Mammalia</taxon>
        <taxon>Eutheria</taxon>
        <taxon>Euarchontoglires</taxon>
        <taxon>Glires</taxon>
        <taxon>Rodentia</taxon>
        <taxon>Myomorpha</taxon>
        <taxon>Muroidea</taxon>
        <taxon>Muridae</taxon>
        <taxon>Murinae</taxon>
        <taxon>Mus</taxon>
        <taxon>Mus</taxon>
    </lineage>
</organism>
<reference key="1">
    <citation type="journal article" date="2005" name="Science">
        <title>The transcriptional landscape of the mammalian genome.</title>
        <authorList>
            <person name="Carninci P."/>
            <person name="Kasukawa T."/>
            <person name="Katayama S."/>
            <person name="Gough J."/>
            <person name="Frith M.C."/>
            <person name="Maeda N."/>
            <person name="Oyama R."/>
            <person name="Ravasi T."/>
            <person name="Lenhard B."/>
            <person name="Wells C."/>
            <person name="Kodzius R."/>
            <person name="Shimokawa K."/>
            <person name="Bajic V.B."/>
            <person name="Brenner S.E."/>
            <person name="Batalov S."/>
            <person name="Forrest A.R."/>
            <person name="Zavolan M."/>
            <person name="Davis M.J."/>
            <person name="Wilming L.G."/>
            <person name="Aidinis V."/>
            <person name="Allen J.E."/>
            <person name="Ambesi-Impiombato A."/>
            <person name="Apweiler R."/>
            <person name="Aturaliya R.N."/>
            <person name="Bailey T.L."/>
            <person name="Bansal M."/>
            <person name="Baxter L."/>
            <person name="Beisel K.W."/>
            <person name="Bersano T."/>
            <person name="Bono H."/>
            <person name="Chalk A.M."/>
            <person name="Chiu K.P."/>
            <person name="Choudhary V."/>
            <person name="Christoffels A."/>
            <person name="Clutterbuck D.R."/>
            <person name="Crowe M.L."/>
            <person name="Dalla E."/>
            <person name="Dalrymple B.P."/>
            <person name="de Bono B."/>
            <person name="Della Gatta G."/>
            <person name="di Bernardo D."/>
            <person name="Down T."/>
            <person name="Engstrom P."/>
            <person name="Fagiolini M."/>
            <person name="Faulkner G."/>
            <person name="Fletcher C.F."/>
            <person name="Fukushima T."/>
            <person name="Furuno M."/>
            <person name="Futaki S."/>
            <person name="Gariboldi M."/>
            <person name="Georgii-Hemming P."/>
            <person name="Gingeras T.R."/>
            <person name="Gojobori T."/>
            <person name="Green R.E."/>
            <person name="Gustincich S."/>
            <person name="Harbers M."/>
            <person name="Hayashi Y."/>
            <person name="Hensch T.K."/>
            <person name="Hirokawa N."/>
            <person name="Hill D."/>
            <person name="Huminiecki L."/>
            <person name="Iacono M."/>
            <person name="Ikeo K."/>
            <person name="Iwama A."/>
            <person name="Ishikawa T."/>
            <person name="Jakt M."/>
            <person name="Kanapin A."/>
            <person name="Katoh M."/>
            <person name="Kawasawa Y."/>
            <person name="Kelso J."/>
            <person name="Kitamura H."/>
            <person name="Kitano H."/>
            <person name="Kollias G."/>
            <person name="Krishnan S.P."/>
            <person name="Kruger A."/>
            <person name="Kummerfeld S.K."/>
            <person name="Kurochkin I.V."/>
            <person name="Lareau L.F."/>
            <person name="Lazarevic D."/>
            <person name="Lipovich L."/>
            <person name="Liu J."/>
            <person name="Liuni S."/>
            <person name="McWilliam S."/>
            <person name="Madan Babu M."/>
            <person name="Madera M."/>
            <person name="Marchionni L."/>
            <person name="Matsuda H."/>
            <person name="Matsuzawa S."/>
            <person name="Miki H."/>
            <person name="Mignone F."/>
            <person name="Miyake S."/>
            <person name="Morris K."/>
            <person name="Mottagui-Tabar S."/>
            <person name="Mulder N."/>
            <person name="Nakano N."/>
            <person name="Nakauchi H."/>
            <person name="Ng P."/>
            <person name="Nilsson R."/>
            <person name="Nishiguchi S."/>
            <person name="Nishikawa S."/>
            <person name="Nori F."/>
            <person name="Ohara O."/>
            <person name="Okazaki Y."/>
            <person name="Orlando V."/>
            <person name="Pang K.C."/>
            <person name="Pavan W.J."/>
            <person name="Pavesi G."/>
            <person name="Pesole G."/>
            <person name="Petrovsky N."/>
            <person name="Piazza S."/>
            <person name="Reed J."/>
            <person name="Reid J.F."/>
            <person name="Ring B.Z."/>
            <person name="Ringwald M."/>
            <person name="Rost B."/>
            <person name="Ruan Y."/>
            <person name="Salzberg S.L."/>
            <person name="Sandelin A."/>
            <person name="Schneider C."/>
            <person name="Schoenbach C."/>
            <person name="Sekiguchi K."/>
            <person name="Semple C.A."/>
            <person name="Seno S."/>
            <person name="Sessa L."/>
            <person name="Sheng Y."/>
            <person name="Shibata Y."/>
            <person name="Shimada H."/>
            <person name="Shimada K."/>
            <person name="Silva D."/>
            <person name="Sinclair B."/>
            <person name="Sperling S."/>
            <person name="Stupka E."/>
            <person name="Sugiura K."/>
            <person name="Sultana R."/>
            <person name="Takenaka Y."/>
            <person name="Taki K."/>
            <person name="Tammoja K."/>
            <person name="Tan S.L."/>
            <person name="Tang S."/>
            <person name="Taylor M.S."/>
            <person name="Tegner J."/>
            <person name="Teichmann S.A."/>
            <person name="Ueda H.R."/>
            <person name="van Nimwegen E."/>
            <person name="Verardo R."/>
            <person name="Wei C.L."/>
            <person name="Yagi K."/>
            <person name="Yamanishi H."/>
            <person name="Zabarovsky E."/>
            <person name="Zhu S."/>
            <person name="Zimmer A."/>
            <person name="Hide W."/>
            <person name="Bult C."/>
            <person name="Grimmond S.M."/>
            <person name="Teasdale R.D."/>
            <person name="Liu E.T."/>
            <person name="Brusic V."/>
            <person name="Quackenbush J."/>
            <person name="Wahlestedt C."/>
            <person name="Mattick J.S."/>
            <person name="Hume D.A."/>
            <person name="Kai C."/>
            <person name="Sasaki D."/>
            <person name="Tomaru Y."/>
            <person name="Fukuda S."/>
            <person name="Kanamori-Katayama M."/>
            <person name="Suzuki M."/>
            <person name="Aoki J."/>
            <person name="Arakawa T."/>
            <person name="Iida J."/>
            <person name="Imamura K."/>
            <person name="Itoh M."/>
            <person name="Kato T."/>
            <person name="Kawaji H."/>
            <person name="Kawagashira N."/>
            <person name="Kawashima T."/>
            <person name="Kojima M."/>
            <person name="Kondo S."/>
            <person name="Konno H."/>
            <person name="Nakano K."/>
            <person name="Ninomiya N."/>
            <person name="Nishio T."/>
            <person name="Okada M."/>
            <person name="Plessy C."/>
            <person name="Shibata K."/>
            <person name="Shiraki T."/>
            <person name="Suzuki S."/>
            <person name="Tagami M."/>
            <person name="Waki K."/>
            <person name="Watahiki A."/>
            <person name="Okamura-Oho Y."/>
            <person name="Suzuki H."/>
            <person name="Kawai J."/>
            <person name="Hayashizaki Y."/>
        </authorList>
    </citation>
    <scope>NUCLEOTIDE SEQUENCE [LARGE SCALE MRNA] (ISOFORMS 1 AND 2)</scope>
    <source>
        <strain>C57BL/6J</strain>
        <tissue>Testis</tissue>
    </source>
</reference>
<reference key="2">
    <citation type="journal article" date="2004" name="Genome Res.">
        <title>The status, quality, and expansion of the NIH full-length cDNA project: the Mammalian Gene Collection (MGC).</title>
        <authorList>
            <consortium name="The MGC Project Team"/>
        </authorList>
    </citation>
    <scope>NUCLEOTIDE SEQUENCE [LARGE SCALE MRNA] (ISOFORM 1)</scope>
    <source>
        <tissue>Brain</tissue>
    </source>
</reference>